<dbReference type="EMBL" id="CP000753">
    <property type="protein sequence ID" value="ABS06484.1"/>
    <property type="molecule type" value="Genomic_DNA"/>
</dbReference>
<dbReference type="RefSeq" id="WP_011982172.1">
    <property type="nucleotide sequence ID" value="NC_009665.1"/>
</dbReference>
<dbReference type="KEGG" id="sbm:Shew185_0314"/>
<dbReference type="HOGENOM" id="CLU_032288_0_0_6"/>
<dbReference type="GO" id="GO:0005886">
    <property type="term" value="C:plasma membrane"/>
    <property type="evidence" value="ECO:0007669"/>
    <property type="project" value="UniProtKB-SubCell"/>
</dbReference>
<dbReference type="HAMAP" id="MF_00672">
    <property type="entry name" value="UPF0761"/>
    <property type="match status" value="1"/>
</dbReference>
<dbReference type="InterPro" id="IPR023679">
    <property type="entry name" value="UPF0761_bac"/>
</dbReference>
<dbReference type="InterPro" id="IPR017039">
    <property type="entry name" value="Virul_fac_BrkB"/>
</dbReference>
<dbReference type="NCBIfam" id="NF002457">
    <property type="entry name" value="PRK01637.1"/>
    <property type="match status" value="1"/>
</dbReference>
<dbReference type="NCBIfam" id="TIGR00765">
    <property type="entry name" value="yihY_not_rbn"/>
    <property type="match status" value="1"/>
</dbReference>
<dbReference type="PANTHER" id="PTHR30213">
    <property type="entry name" value="INNER MEMBRANE PROTEIN YHJD"/>
    <property type="match status" value="1"/>
</dbReference>
<dbReference type="PANTHER" id="PTHR30213:SF0">
    <property type="entry name" value="UPF0761 MEMBRANE PROTEIN YIHY"/>
    <property type="match status" value="1"/>
</dbReference>
<dbReference type="Pfam" id="PF03631">
    <property type="entry name" value="Virul_fac_BrkB"/>
    <property type="match status" value="1"/>
</dbReference>
<dbReference type="PIRSF" id="PIRSF035875">
    <property type="entry name" value="RNase_BN"/>
    <property type="match status" value="1"/>
</dbReference>
<reference key="1">
    <citation type="submission" date="2007-07" db="EMBL/GenBank/DDBJ databases">
        <title>Complete sequence of chromosome of Shewanella baltica OS185.</title>
        <authorList>
            <consortium name="US DOE Joint Genome Institute"/>
            <person name="Copeland A."/>
            <person name="Lucas S."/>
            <person name="Lapidus A."/>
            <person name="Barry K."/>
            <person name="Glavina del Rio T."/>
            <person name="Dalin E."/>
            <person name="Tice H."/>
            <person name="Pitluck S."/>
            <person name="Sims D."/>
            <person name="Brettin T."/>
            <person name="Bruce D."/>
            <person name="Detter J.C."/>
            <person name="Han C."/>
            <person name="Schmutz J."/>
            <person name="Larimer F."/>
            <person name="Land M."/>
            <person name="Hauser L."/>
            <person name="Kyrpides N."/>
            <person name="Mikhailova N."/>
            <person name="Brettar I."/>
            <person name="Rodrigues J."/>
            <person name="Konstantinidis K."/>
            <person name="Tiedje J."/>
            <person name="Richardson P."/>
        </authorList>
    </citation>
    <scope>NUCLEOTIDE SEQUENCE [LARGE SCALE GENOMIC DNA]</scope>
    <source>
        <strain>OS185</strain>
    </source>
</reference>
<feature type="chain" id="PRO_1000044724" description="UPF0761 membrane protein Shew185_0314">
    <location>
        <begin position="1"/>
        <end position="323"/>
    </location>
</feature>
<feature type="transmembrane region" description="Helical" evidence="1">
    <location>
        <begin position="4"/>
        <end position="24"/>
    </location>
</feature>
<feature type="transmembrane region" description="Helical" evidence="1">
    <location>
        <begin position="45"/>
        <end position="65"/>
    </location>
</feature>
<feature type="transmembrane region" description="Helical" evidence="1">
    <location>
        <begin position="102"/>
        <end position="122"/>
    </location>
</feature>
<feature type="transmembrane region" description="Helical" evidence="1">
    <location>
        <begin position="137"/>
        <end position="157"/>
    </location>
</feature>
<feature type="transmembrane region" description="Helical" evidence="1">
    <location>
        <begin position="182"/>
        <end position="202"/>
    </location>
</feature>
<feature type="transmembrane region" description="Helical" evidence="1">
    <location>
        <begin position="213"/>
        <end position="233"/>
    </location>
</feature>
<feature type="transmembrane region" description="Helical" evidence="1">
    <location>
        <begin position="247"/>
        <end position="267"/>
    </location>
</feature>
<sequence length="323" mass="35233">MTKKIELAQIRVLFLGIWHFLLHLRRRLVEDQINIRAGHLAYVTLLSLVPMVAVTMSMLSAFPVFKGIRGQIEGFVYENFLPAAGDTVQVYINEFVGNASKGTAVGIAALVVVAIMLISAIDKSLNNIWRTKEKRSVVVAFSMYWMVLTLGPVLVGASLVASSYVISLKVFEAEALSGMLPIFIARLPMLFSVAAFLLLYMVVPNQKVKFLHALLGAIVAALLFELGKKGFALYVTQFPSYEAIYGALATIPIVFVWVYLSWMIVLLGAEITAAMPEYLDYESSSDDETALNAKPLADASQGDSPSVLTSAEVTALKAVAKSE</sequence>
<gene>
    <name type="ordered locus">Shew185_0314</name>
</gene>
<proteinExistence type="inferred from homology"/>
<evidence type="ECO:0000255" key="1">
    <source>
        <dbReference type="HAMAP-Rule" id="MF_00672"/>
    </source>
</evidence>
<comment type="subcellular location">
    <subcellularLocation>
        <location evidence="1">Cell inner membrane</location>
        <topology evidence="1">Multi-pass membrane protein</topology>
    </subcellularLocation>
</comment>
<comment type="similarity">
    <text evidence="1">Belongs to the UPF0761 family.</text>
</comment>
<keyword id="KW-0997">Cell inner membrane</keyword>
<keyword id="KW-1003">Cell membrane</keyword>
<keyword id="KW-0472">Membrane</keyword>
<keyword id="KW-0812">Transmembrane</keyword>
<keyword id="KW-1133">Transmembrane helix</keyword>
<organism>
    <name type="scientific">Shewanella baltica (strain OS185)</name>
    <dbReference type="NCBI Taxonomy" id="402882"/>
    <lineage>
        <taxon>Bacteria</taxon>
        <taxon>Pseudomonadati</taxon>
        <taxon>Pseudomonadota</taxon>
        <taxon>Gammaproteobacteria</taxon>
        <taxon>Alteromonadales</taxon>
        <taxon>Shewanellaceae</taxon>
        <taxon>Shewanella</taxon>
    </lineage>
</organism>
<name>Y314_SHEB8</name>
<accession>A6WI45</accession>
<protein>
    <recommendedName>
        <fullName evidence="1">UPF0761 membrane protein Shew185_0314</fullName>
    </recommendedName>
</protein>